<proteinExistence type="inferred from homology"/>
<organism>
    <name type="scientific">Saccharomyces cerevisiae (strain Lalvin EC1118 / Prise de mousse)</name>
    <name type="common">Baker's yeast</name>
    <dbReference type="NCBI Taxonomy" id="643680"/>
    <lineage>
        <taxon>Eukaryota</taxon>
        <taxon>Fungi</taxon>
        <taxon>Dikarya</taxon>
        <taxon>Ascomycota</taxon>
        <taxon>Saccharomycotina</taxon>
        <taxon>Saccharomycetes</taxon>
        <taxon>Saccharomycetales</taxon>
        <taxon>Saccharomycetaceae</taxon>
        <taxon>Saccharomyces</taxon>
    </lineage>
</organism>
<gene>
    <name evidence="1" type="primary">KRR1</name>
    <name type="ORF">EC1118_1C17_0067g</name>
</gene>
<dbReference type="EMBL" id="FN393062">
    <property type="protein sequence ID" value="CAY78146.1"/>
    <property type="molecule type" value="Genomic_DNA"/>
</dbReference>
<dbReference type="SMR" id="C8Z430"/>
<dbReference type="HOGENOM" id="CLU_040185_0_2_1"/>
<dbReference type="OrthoDB" id="26728at4893"/>
<dbReference type="Proteomes" id="UP000000286">
    <property type="component" value="Chromosome III, Scaffold EC1118_1C17"/>
</dbReference>
<dbReference type="GO" id="GO:0005730">
    <property type="term" value="C:nucleolus"/>
    <property type="evidence" value="ECO:0007669"/>
    <property type="project" value="UniProtKB-SubCell"/>
</dbReference>
<dbReference type="GO" id="GO:0032040">
    <property type="term" value="C:small-subunit processome"/>
    <property type="evidence" value="ECO:0007669"/>
    <property type="project" value="TreeGrafter"/>
</dbReference>
<dbReference type="GO" id="GO:0003723">
    <property type="term" value="F:RNA binding"/>
    <property type="evidence" value="ECO:0007669"/>
    <property type="project" value="UniProtKB-KW"/>
</dbReference>
<dbReference type="GO" id="GO:0006364">
    <property type="term" value="P:rRNA processing"/>
    <property type="evidence" value="ECO:0007669"/>
    <property type="project" value="UniProtKB-KW"/>
</dbReference>
<dbReference type="CDD" id="cd22393">
    <property type="entry name" value="KH-I_KRR1_rpt1"/>
    <property type="match status" value="1"/>
</dbReference>
<dbReference type="CDD" id="cd22394">
    <property type="entry name" value="KH-I_KRR1_rpt2"/>
    <property type="match status" value="1"/>
</dbReference>
<dbReference type="FunFam" id="3.30.1370.10:FF:000011">
    <property type="entry name" value="KRR1 small subunit processome component"/>
    <property type="match status" value="1"/>
</dbReference>
<dbReference type="FunFam" id="3.30.1370.10:FF:000014">
    <property type="entry name" value="KRR1 small subunit processome component"/>
    <property type="match status" value="1"/>
</dbReference>
<dbReference type="Gene3D" id="3.30.1370.10">
    <property type="entry name" value="K Homology domain, type 1"/>
    <property type="match status" value="2"/>
</dbReference>
<dbReference type="InterPro" id="IPR004087">
    <property type="entry name" value="KH_dom"/>
</dbReference>
<dbReference type="InterPro" id="IPR036612">
    <property type="entry name" value="KH_dom_type_1_sf"/>
</dbReference>
<dbReference type="InterPro" id="IPR041174">
    <property type="entry name" value="KRR1-like_KH1"/>
</dbReference>
<dbReference type="InterPro" id="IPR048550">
    <property type="entry name" value="KRR1-like_KH1_euk"/>
</dbReference>
<dbReference type="InterPro" id="IPR048548">
    <property type="entry name" value="KRR1-like_KH2"/>
</dbReference>
<dbReference type="InterPro" id="IPR048549">
    <property type="entry name" value="KRR1-like_KH2_euk"/>
</dbReference>
<dbReference type="InterPro" id="IPR024166">
    <property type="entry name" value="rRNA_assembly_KRR1"/>
</dbReference>
<dbReference type="PANTHER" id="PTHR12581">
    <property type="entry name" value="HIV-1 REV BINDING PROTEIN 2, 3"/>
    <property type="match status" value="1"/>
</dbReference>
<dbReference type="PANTHER" id="PTHR12581:SF0">
    <property type="entry name" value="KRR1 SMALL SUBUNIT PROCESSOME COMPONENT HOMOLOG"/>
    <property type="match status" value="1"/>
</dbReference>
<dbReference type="Pfam" id="PF17903">
    <property type="entry name" value="KH_KRR1_1st"/>
    <property type="match status" value="1"/>
</dbReference>
<dbReference type="Pfam" id="PF21800">
    <property type="entry name" value="KH_KRR1_2nd"/>
    <property type="match status" value="1"/>
</dbReference>
<dbReference type="PIRSF" id="PIRSF006515">
    <property type="entry name" value="KRR1"/>
    <property type="match status" value="1"/>
</dbReference>
<dbReference type="SMART" id="SM00322">
    <property type="entry name" value="KH"/>
    <property type="match status" value="1"/>
</dbReference>
<dbReference type="SUPFAM" id="SSF54791">
    <property type="entry name" value="Eukaryotic type KH-domain (KH-domain type I)"/>
    <property type="match status" value="1"/>
</dbReference>
<sequence>MVSTHNRDKPWDTDDIDKWKIEEFKEEDNASGQPFAEESSFMTLFPKYRESYLKTIWNDVTRALDKHNIACVLDLVEGSMTVKTTRKTYDPAIILKARDLIKLLARSVPFPQAVKILQDDMACDVIKIGNFVTNKERFVKRRQRLVGPNGNTLKALELLTKCYILVQGNTVSAMGPFKGLKEVRRVVEDCMKNIHPIYHIKELMIKRELAKRPELANEDWSRFLPMFKKRNVARKKPKKIRNVEKKVYTPFPPAQLPRKVDLEIESGEYFLSKREKQMKKLNEQKEKQMEREIERQEERAKDFIAPEEEAYKPNQN</sequence>
<reference evidence="4" key="1">
    <citation type="journal article" date="2009" name="Proc. Natl. Acad. Sci. U.S.A.">
        <title>Eukaryote-to-eukaryote gene transfer events revealed by the genome sequence of the wine yeast Saccharomyces cerevisiae EC1118.</title>
        <authorList>
            <person name="Novo M."/>
            <person name="Bigey F."/>
            <person name="Beyne E."/>
            <person name="Galeote V."/>
            <person name="Gavory F."/>
            <person name="Mallet S."/>
            <person name="Cambon B."/>
            <person name="Legras J.-L."/>
            <person name="Wincker P."/>
            <person name="Casaregola S."/>
            <person name="Dequin S."/>
        </authorList>
    </citation>
    <scope>NUCLEOTIDE SEQUENCE [LARGE SCALE GENOMIC DNA]</scope>
    <source>
        <strain evidence="4">Lalvin EC1118 / Prise de mousse</strain>
    </source>
</reference>
<evidence type="ECO:0000250" key="1">
    <source>
        <dbReference type="UniProtKB" id="P25586"/>
    </source>
</evidence>
<evidence type="ECO:0000255" key="2"/>
<evidence type="ECO:0000256" key="3">
    <source>
        <dbReference type="SAM" id="MobiDB-lite"/>
    </source>
</evidence>
<evidence type="ECO:0000312" key="4">
    <source>
        <dbReference type="EMBL" id="CAY78146.1"/>
    </source>
</evidence>
<protein>
    <recommendedName>
        <fullName evidence="1">KRR1 small subunit processome component</fullName>
    </recommendedName>
    <alternativeName>
        <fullName evidence="1">KRR-R motif-containing protein 1</fullName>
    </alternativeName>
    <alternativeName>
        <fullName evidence="1">Ribosomal RNA assembly protein KRR1</fullName>
    </alternativeName>
</protein>
<keyword id="KW-0539">Nucleus</keyword>
<keyword id="KW-0687">Ribonucleoprotein</keyword>
<keyword id="KW-0690">Ribosome biogenesis</keyword>
<keyword id="KW-0694">RNA-binding</keyword>
<keyword id="KW-0698">rRNA processing</keyword>
<comment type="function">
    <text evidence="1">Required for 40S ribosome biogenesis. Involved in nucleolar processing of pre-18S ribosomal RNA and ribosome assembly. Essential for vegetative growth (By similarity).</text>
</comment>
<comment type="subunit">
    <text evidence="1">Component of the ribosomal small subunit (SSU) processome composed of at least 40 protein subunits and snoRNA U3. Interacts with snoRNA U3. Interacts with MPP10, KRI1 and with ribosomal proteins RPS1A, RPS4A, RPS4B, RPS8A, RPS8B, RPS11A, RPS11B, RPS13, RPS24, RPS25, RPL4A, RPL7B, RPL8, RPL23, RPL25 and RPL28 (By similarity).</text>
</comment>
<comment type="subcellular location">
    <subcellularLocation>
        <location evidence="1">Nucleus</location>
        <location evidence="1">Nucleolus</location>
    </subcellularLocation>
</comment>
<comment type="similarity">
    <text evidence="2">Belongs to the KRR1 family.</text>
</comment>
<name>KRR1_YEAS8</name>
<feature type="chain" id="PRO_0000415663" description="KRR1 small subunit processome component">
    <location>
        <begin position="1"/>
        <end position="316"/>
    </location>
</feature>
<feature type="domain" description="KH" evidence="2">
    <location>
        <begin position="122"/>
        <end position="192"/>
    </location>
</feature>
<feature type="region of interest" description="Disordered" evidence="3">
    <location>
        <begin position="279"/>
        <end position="316"/>
    </location>
</feature>
<feature type="compositionally biased region" description="Basic and acidic residues" evidence="3">
    <location>
        <begin position="279"/>
        <end position="304"/>
    </location>
</feature>
<accession>C8Z430</accession>